<evidence type="ECO:0000255" key="1">
    <source>
        <dbReference type="HAMAP-Rule" id="MF_00011"/>
    </source>
</evidence>
<proteinExistence type="inferred from homology"/>
<reference key="1">
    <citation type="journal article" date="2008" name="DNA Res.">
        <title>Comparative genome analysis of Lactobacillus reuteri and Lactobacillus fermentum reveal a genomic island for reuterin and cobalamin production.</title>
        <authorList>
            <person name="Morita H."/>
            <person name="Toh H."/>
            <person name="Fukuda S."/>
            <person name="Horikawa H."/>
            <person name="Oshima K."/>
            <person name="Suzuki T."/>
            <person name="Murakami M."/>
            <person name="Hisamatsu S."/>
            <person name="Kato Y."/>
            <person name="Takizawa T."/>
            <person name="Fukuoka H."/>
            <person name="Yoshimura T."/>
            <person name="Itoh K."/>
            <person name="O'Sullivan D.J."/>
            <person name="McKay L.L."/>
            <person name="Ohno H."/>
            <person name="Kikuchi J."/>
            <person name="Masaoka T."/>
            <person name="Hattori M."/>
        </authorList>
    </citation>
    <scope>NUCLEOTIDE SEQUENCE [LARGE SCALE GENOMIC DNA]</scope>
    <source>
        <strain>NBRC 3956 / LMG 18251</strain>
    </source>
</reference>
<sequence>MATVVIVGSQWGDEGKGKMTDYLSQEANVVVRSQGGDNAGHTIEFDRQKFALRLIPSGIFGENTTAVIGNGVVINPQALLEEIKYLTDRGVDISGLKISSRAQVIMPYHLLLDECQEKAKGAAKIGTTKKGIGPTYVDKVSRIGIRVADLLEKDTFAAKLKQNLEIKNQLFTKIYGVDPVDFDEIFNQYYEYGQQIKQYVTDTSLLVNDAIDRGDKVLFEGAQGTMLDIDEGTYPYVTSSNPTAGGAPTGAGVGPNKIETVVGIAKAYTTRVGEGPFPTELNDEIGDYIRETGHEYGTVTGRPRRVGWFDAVAMRHARRVNGMTYLSLNLLDVLTGLKTIKIARAYELDGQEINYYPASLAELDRCTPLYEEVPGWEEDITQVTDYEDLPANAKHFLDRIVELSETPLATISVGPSREQTIILRDPWRG</sequence>
<gene>
    <name evidence="1" type="primary">purA</name>
    <name type="ordered locus">LAF_0044</name>
</gene>
<name>PURA_LIMF3</name>
<comment type="function">
    <text evidence="1">Plays an important role in the de novo pathway of purine nucleotide biosynthesis. Catalyzes the first committed step in the biosynthesis of AMP from IMP.</text>
</comment>
<comment type="catalytic activity">
    <reaction evidence="1">
        <text>IMP + L-aspartate + GTP = N(6)-(1,2-dicarboxyethyl)-AMP + GDP + phosphate + 2 H(+)</text>
        <dbReference type="Rhea" id="RHEA:15753"/>
        <dbReference type="ChEBI" id="CHEBI:15378"/>
        <dbReference type="ChEBI" id="CHEBI:29991"/>
        <dbReference type="ChEBI" id="CHEBI:37565"/>
        <dbReference type="ChEBI" id="CHEBI:43474"/>
        <dbReference type="ChEBI" id="CHEBI:57567"/>
        <dbReference type="ChEBI" id="CHEBI:58053"/>
        <dbReference type="ChEBI" id="CHEBI:58189"/>
        <dbReference type="EC" id="6.3.4.4"/>
    </reaction>
</comment>
<comment type="cofactor">
    <cofactor evidence="1">
        <name>Mg(2+)</name>
        <dbReference type="ChEBI" id="CHEBI:18420"/>
    </cofactor>
    <text evidence="1">Binds 1 Mg(2+) ion per subunit.</text>
</comment>
<comment type="pathway">
    <text evidence="1">Purine metabolism; AMP biosynthesis via de novo pathway; AMP from IMP: step 1/2.</text>
</comment>
<comment type="subunit">
    <text evidence="1">Homodimer.</text>
</comment>
<comment type="subcellular location">
    <subcellularLocation>
        <location evidence="1">Cytoplasm</location>
    </subcellularLocation>
</comment>
<comment type="similarity">
    <text evidence="1">Belongs to the adenylosuccinate synthetase family.</text>
</comment>
<keyword id="KW-0963">Cytoplasm</keyword>
<keyword id="KW-0342">GTP-binding</keyword>
<keyword id="KW-0436">Ligase</keyword>
<keyword id="KW-0460">Magnesium</keyword>
<keyword id="KW-0479">Metal-binding</keyword>
<keyword id="KW-0547">Nucleotide-binding</keyword>
<keyword id="KW-0658">Purine biosynthesis</keyword>
<keyword id="KW-1185">Reference proteome</keyword>
<protein>
    <recommendedName>
        <fullName evidence="1">Adenylosuccinate synthetase</fullName>
        <shortName evidence="1">AMPSase</shortName>
        <shortName evidence="1">AdSS</shortName>
        <ecNumber evidence="1">6.3.4.4</ecNumber>
    </recommendedName>
    <alternativeName>
        <fullName evidence="1">IMP--aspartate ligase</fullName>
    </alternativeName>
</protein>
<dbReference type="EC" id="6.3.4.4" evidence="1"/>
<dbReference type="EMBL" id="AP008937">
    <property type="protein sequence ID" value="BAG26380.1"/>
    <property type="molecule type" value="Genomic_DNA"/>
</dbReference>
<dbReference type="RefSeq" id="WP_003685683.1">
    <property type="nucleotide sequence ID" value="NC_010610.1"/>
</dbReference>
<dbReference type="SMR" id="B2GEZ1"/>
<dbReference type="KEGG" id="lfe:LAF_0044"/>
<dbReference type="eggNOG" id="COG0104">
    <property type="taxonomic scope" value="Bacteria"/>
</dbReference>
<dbReference type="HOGENOM" id="CLU_029848_0_0_9"/>
<dbReference type="UniPathway" id="UPA00075">
    <property type="reaction ID" value="UER00335"/>
</dbReference>
<dbReference type="Proteomes" id="UP000001697">
    <property type="component" value="Chromosome"/>
</dbReference>
<dbReference type="GO" id="GO:0005737">
    <property type="term" value="C:cytoplasm"/>
    <property type="evidence" value="ECO:0007669"/>
    <property type="project" value="UniProtKB-SubCell"/>
</dbReference>
<dbReference type="GO" id="GO:0004019">
    <property type="term" value="F:adenylosuccinate synthase activity"/>
    <property type="evidence" value="ECO:0007669"/>
    <property type="project" value="UniProtKB-UniRule"/>
</dbReference>
<dbReference type="GO" id="GO:0005525">
    <property type="term" value="F:GTP binding"/>
    <property type="evidence" value="ECO:0007669"/>
    <property type="project" value="UniProtKB-UniRule"/>
</dbReference>
<dbReference type="GO" id="GO:0000287">
    <property type="term" value="F:magnesium ion binding"/>
    <property type="evidence" value="ECO:0007669"/>
    <property type="project" value="UniProtKB-UniRule"/>
</dbReference>
<dbReference type="GO" id="GO:0044208">
    <property type="term" value="P:'de novo' AMP biosynthetic process"/>
    <property type="evidence" value="ECO:0007669"/>
    <property type="project" value="UniProtKB-UniRule"/>
</dbReference>
<dbReference type="GO" id="GO:0046040">
    <property type="term" value="P:IMP metabolic process"/>
    <property type="evidence" value="ECO:0007669"/>
    <property type="project" value="TreeGrafter"/>
</dbReference>
<dbReference type="CDD" id="cd03108">
    <property type="entry name" value="AdSS"/>
    <property type="match status" value="1"/>
</dbReference>
<dbReference type="FunFam" id="1.10.300.10:FF:000001">
    <property type="entry name" value="Adenylosuccinate synthetase"/>
    <property type="match status" value="1"/>
</dbReference>
<dbReference type="FunFam" id="3.90.170.10:FF:000001">
    <property type="entry name" value="Adenylosuccinate synthetase"/>
    <property type="match status" value="1"/>
</dbReference>
<dbReference type="Gene3D" id="3.40.440.10">
    <property type="entry name" value="Adenylosuccinate Synthetase, subunit A, domain 1"/>
    <property type="match status" value="1"/>
</dbReference>
<dbReference type="Gene3D" id="1.10.300.10">
    <property type="entry name" value="Adenylosuccinate Synthetase, subunit A, domain 2"/>
    <property type="match status" value="1"/>
</dbReference>
<dbReference type="Gene3D" id="3.90.170.10">
    <property type="entry name" value="Adenylosuccinate Synthetase, subunit A, domain 3"/>
    <property type="match status" value="1"/>
</dbReference>
<dbReference type="HAMAP" id="MF_00011">
    <property type="entry name" value="Adenylosucc_synth"/>
    <property type="match status" value="1"/>
</dbReference>
<dbReference type="InterPro" id="IPR018220">
    <property type="entry name" value="Adenylosuccin_syn_GTP-bd"/>
</dbReference>
<dbReference type="InterPro" id="IPR033128">
    <property type="entry name" value="Adenylosuccin_syn_Lys_AS"/>
</dbReference>
<dbReference type="InterPro" id="IPR042109">
    <property type="entry name" value="Adenylosuccinate_synth_dom1"/>
</dbReference>
<dbReference type="InterPro" id="IPR042110">
    <property type="entry name" value="Adenylosuccinate_synth_dom2"/>
</dbReference>
<dbReference type="InterPro" id="IPR042111">
    <property type="entry name" value="Adenylosuccinate_synth_dom3"/>
</dbReference>
<dbReference type="InterPro" id="IPR001114">
    <property type="entry name" value="Adenylosuccinate_synthetase"/>
</dbReference>
<dbReference type="InterPro" id="IPR027417">
    <property type="entry name" value="P-loop_NTPase"/>
</dbReference>
<dbReference type="NCBIfam" id="NF002223">
    <property type="entry name" value="PRK01117.1"/>
    <property type="match status" value="1"/>
</dbReference>
<dbReference type="NCBIfam" id="TIGR00184">
    <property type="entry name" value="purA"/>
    <property type="match status" value="1"/>
</dbReference>
<dbReference type="PANTHER" id="PTHR11846">
    <property type="entry name" value="ADENYLOSUCCINATE SYNTHETASE"/>
    <property type="match status" value="1"/>
</dbReference>
<dbReference type="PANTHER" id="PTHR11846:SF0">
    <property type="entry name" value="ADENYLOSUCCINATE SYNTHETASE"/>
    <property type="match status" value="1"/>
</dbReference>
<dbReference type="Pfam" id="PF00709">
    <property type="entry name" value="Adenylsucc_synt"/>
    <property type="match status" value="1"/>
</dbReference>
<dbReference type="SMART" id="SM00788">
    <property type="entry name" value="Adenylsucc_synt"/>
    <property type="match status" value="1"/>
</dbReference>
<dbReference type="SUPFAM" id="SSF52540">
    <property type="entry name" value="P-loop containing nucleoside triphosphate hydrolases"/>
    <property type="match status" value="1"/>
</dbReference>
<dbReference type="PROSITE" id="PS01266">
    <property type="entry name" value="ADENYLOSUCCIN_SYN_1"/>
    <property type="match status" value="1"/>
</dbReference>
<dbReference type="PROSITE" id="PS00513">
    <property type="entry name" value="ADENYLOSUCCIN_SYN_2"/>
    <property type="match status" value="1"/>
</dbReference>
<organism>
    <name type="scientific">Limosilactobacillus fermentum (strain NBRC 3956 / LMG 18251)</name>
    <name type="common">Lactobacillus fermentum</name>
    <dbReference type="NCBI Taxonomy" id="334390"/>
    <lineage>
        <taxon>Bacteria</taxon>
        <taxon>Bacillati</taxon>
        <taxon>Bacillota</taxon>
        <taxon>Bacilli</taxon>
        <taxon>Lactobacillales</taxon>
        <taxon>Lactobacillaceae</taxon>
        <taxon>Limosilactobacillus</taxon>
    </lineage>
</organism>
<accession>B2GEZ1</accession>
<feature type="chain" id="PRO_1000089308" description="Adenylosuccinate synthetase">
    <location>
        <begin position="1"/>
        <end position="429"/>
    </location>
</feature>
<feature type="active site" description="Proton acceptor" evidence="1">
    <location>
        <position position="13"/>
    </location>
</feature>
<feature type="active site" description="Proton donor" evidence="1">
    <location>
        <position position="41"/>
    </location>
</feature>
<feature type="binding site" evidence="1">
    <location>
        <begin position="12"/>
        <end position="18"/>
    </location>
    <ligand>
        <name>GTP</name>
        <dbReference type="ChEBI" id="CHEBI:37565"/>
    </ligand>
</feature>
<feature type="binding site" description="in other chain" evidence="1">
    <location>
        <begin position="13"/>
        <end position="16"/>
    </location>
    <ligand>
        <name>IMP</name>
        <dbReference type="ChEBI" id="CHEBI:58053"/>
        <note>ligand shared between dimeric partners</note>
    </ligand>
</feature>
<feature type="binding site" evidence="1">
    <location>
        <position position="13"/>
    </location>
    <ligand>
        <name>Mg(2+)</name>
        <dbReference type="ChEBI" id="CHEBI:18420"/>
    </ligand>
</feature>
<feature type="binding site" description="in other chain" evidence="1">
    <location>
        <begin position="38"/>
        <end position="41"/>
    </location>
    <ligand>
        <name>IMP</name>
        <dbReference type="ChEBI" id="CHEBI:58053"/>
        <note>ligand shared between dimeric partners</note>
    </ligand>
</feature>
<feature type="binding site" evidence="1">
    <location>
        <begin position="40"/>
        <end position="42"/>
    </location>
    <ligand>
        <name>GTP</name>
        <dbReference type="ChEBI" id="CHEBI:37565"/>
    </ligand>
</feature>
<feature type="binding site" evidence="1">
    <location>
        <position position="40"/>
    </location>
    <ligand>
        <name>Mg(2+)</name>
        <dbReference type="ChEBI" id="CHEBI:18420"/>
    </ligand>
</feature>
<feature type="binding site" description="in other chain" evidence="1">
    <location>
        <position position="128"/>
    </location>
    <ligand>
        <name>IMP</name>
        <dbReference type="ChEBI" id="CHEBI:58053"/>
        <note>ligand shared between dimeric partners</note>
    </ligand>
</feature>
<feature type="binding site" evidence="1">
    <location>
        <position position="142"/>
    </location>
    <ligand>
        <name>IMP</name>
        <dbReference type="ChEBI" id="CHEBI:58053"/>
        <note>ligand shared between dimeric partners</note>
    </ligand>
</feature>
<feature type="binding site" description="in other chain" evidence="1">
    <location>
        <position position="223"/>
    </location>
    <ligand>
        <name>IMP</name>
        <dbReference type="ChEBI" id="CHEBI:58053"/>
        <note>ligand shared between dimeric partners</note>
    </ligand>
</feature>
<feature type="binding site" description="in other chain" evidence="1">
    <location>
        <position position="238"/>
    </location>
    <ligand>
        <name>IMP</name>
        <dbReference type="ChEBI" id="CHEBI:58053"/>
        <note>ligand shared between dimeric partners</note>
    </ligand>
</feature>
<feature type="binding site" evidence="1">
    <location>
        <begin position="298"/>
        <end position="304"/>
    </location>
    <ligand>
        <name>substrate</name>
    </ligand>
</feature>
<feature type="binding site" description="in other chain" evidence="1">
    <location>
        <position position="302"/>
    </location>
    <ligand>
        <name>IMP</name>
        <dbReference type="ChEBI" id="CHEBI:58053"/>
        <note>ligand shared between dimeric partners</note>
    </ligand>
</feature>
<feature type="binding site" evidence="1">
    <location>
        <position position="304"/>
    </location>
    <ligand>
        <name>GTP</name>
        <dbReference type="ChEBI" id="CHEBI:37565"/>
    </ligand>
</feature>
<feature type="binding site" evidence="1">
    <location>
        <begin position="330"/>
        <end position="332"/>
    </location>
    <ligand>
        <name>GTP</name>
        <dbReference type="ChEBI" id="CHEBI:37565"/>
    </ligand>
</feature>
<feature type="binding site" evidence="1">
    <location>
        <begin position="412"/>
        <end position="414"/>
    </location>
    <ligand>
        <name>GTP</name>
        <dbReference type="ChEBI" id="CHEBI:37565"/>
    </ligand>
</feature>